<gene>
    <name type="primary">mars</name>
    <name type="synonym">gkap</name>
    <name type="ORF">CG17064</name>
</gene>
<protein>
    <recommendedName>
        <fullName>Guanylate kinase-associated protein mars</fullName>
    </recommendedName>
</protein>
<comment type="function">
    <text evidence="2">Cell cycle regulator.</text>
</comment>
<comment type="subcellular location">
    <subcellularLocation>
        <location evidence="2">Cell membrane</location>
        <topology evidence="2">Peripheral membrane protein</topology>
    </subcellularLocation>
    <subcellularLocation>
        <location evidence="2">Nucleus</location>
        <location evidence="2">Nucleoplasm</location>
    </subcellularLocation>
    <subcellularLocation>
        <location evidence="2">Cytoplasm</location>
    </subcellularLocation>
    <subcellularLocation>
        <location evidence="2">Cytoplasm</location>
        <location evidence="2">Cytoskeleton</location>
        <location evidence="2">Spindle</location>
    </subcellularLocation>
    <text>Localizes to the cell membrane of epithelial cells. Its subcellular localization dynamically changes during cell-cycle progression. At the prophase, it concentrates at the nucleoplasm. In the metaphase cells, it becomes diffusive in the cytoplasm and some is concentrated at the mitotic spindles and spindle poles.</text>
</comment>
<comment type="tissue specificity">
    <text>Expressed in the central nervous system and at different stages of gametogenesis. In embryos, it is expressed in central nervous system and brain. In testis, it is strongly expressed in pre-meiotic germ cells, but is not found in somatic or post-meiotic cells.</text>
</comment>
<comment type="developmental stage">
    <text evidence="2">Predominantly expressed in embryos and in the adult germline (at protein level). Only present in mitotic cells; at the anaphase and telophase, its begins to degrade.</text>
</comment>
<comment type="similarity">
    <text evidence="5">Belongs to the SAPAP family.</text>
</comment>
<accession>Q7K3L1</accession>
<feature type="chain" id="PRO_0000372841" description="Guanylate kinase-associated protein mars">
    <location>
        <begin position="1"/>
        <end position="921"/>
    </location>
</feature>
<feature type="region of interest" description="Disordered" evidence="1">
    <location>
        <begin position="179"/>
        <end position="208"/>
    </location>
</feature>
<feature type="region of interest" description="Disordered" evidence="1">
    <location>
        <begin position="273"/>
        <end position="325"/>
    </location>
</feature>
<feature type="region of interest" description="Disordered" evidence="1">
    <location>
        <begin position="500"/>
        <end position="531"/>
    </location>
</feature>
<feature type="region of interest" description="Disordered" evidence="1">
    <location>
        <begin position="641"/>
        <end position="660"/>
    </location>
</feature>
<feature type="region of interest" description="Disordered" evidence="1">
    <location>
        <begin position="743"/>
        <end position="763"/>
    </location>
</feature>
<feature type="region of interest" description="Disordered" evidence="1">
    <location>
        <begin position="809"/>
        <end position="833"/>
    </location>
</feature>
<feature type="region of interest" description="Disordered" evidence="1">
    <location>
        <begin position="861"/>
        <end position="921"/>
    </location>
</feature>
<feature type="compositionally biased region" description="Low complexity" evidence="1">
    <location>
        <begin position="193"/>
        <end position="208"/>
    </location>
</feature>
<feature type="compositionally biased region" description="Low complexity" evidence="1">
    <location>
        <begin position="273"/>
        <end position="285"/>
    </location>
</feature>
<feature type="compositionally biased region" description="Polar residues" evidence="1">
    <location>
        <begin position="878"/>
        <end position="907"/>
    </location>
</feature>
<feature type="modified residue" description="Phosphoserine" evidence="4">
    <location>
        <position position="49"/>
    </location>
</feature>
<feature type="modified residue" description="Phosphothreonine" evidence="4">
    <location>
        <position position="51"/>
    </location>
</feature>
<feature type="modified residue" description="Phosphoserine" evidence="3">
    <location>
        <position position="76"/>
    </location>
</feature>
<feature type="modified residue" description="Phosphoserine" evidence="4">
    <location>
        <position position="170"/>
    </location>
</feature>
<feature type="modified residue" description="Phosphotyrosine" evidence="4">
    <location>
        <position position="172"/>
    </location>
</feature>
<feature type="modified residue" description="Phosphoserine" evidence="4">
    <location>
        <position position="444"/>
    </location>
</feature>
<feature type="modified residue" description="Phosphothreonine" evidence="4">
    <location>
        <position position="519"/>
    </location>
</feature>
<feature type="modified residue" description="Phosphoserine" evidence="3 4">
    <location>
        <position position="554"/>
    </location>
</feature>
<feature type="modified residue" description="Phosphoserine" evidence="4">
    <location>
        <position position="785"/>
    </location>
</feature>
<feature type="modified residue" description="Phosphoserine" evidence="4">
    <location>
        <position position="792"/>
    </location>
</feature>
<feature type="modified residue" description="Phosphothreonine" evidence="4">
    <location>
        <position position="826"/>
    </location>
</feature>
<reference key="1">
    <citation type="journal article" date="2004" name="Gene Expr. Patterns">
        <title>Cloning and expression of mars, a novel member of the guanylate kinase associated protein family in Drosophila.</title>
        <authorList>
            <person name="Bennett D."/>
            <person name="Alphey L."/>
        </authorList>
    </citation>
    <scope>NUCLEOTIDE SEQUENCE [MRNA]</scope>
</reference>
<reference key="2">
    <citation type="journal article" date="2000" name="Science">
        <title>The genome sequence of Drosophila melanogaster.</title>
        <authorList>
            <person name="Adams M.D."/>
            <person name="Celniker S.E."/>
            <person name="Holt R.A."/>
            <person name="Evans C.A."/>
            <person name="Gocayne J.D."/>
            <person name="Amanatides P.G."/>
            <person name="Scherer S.E."/>
            <person name="Li P.W."/>
            <person name="Hoskins R.A."/>
            <person name="Galle R.F."/>
            <person name="George R.A."/>
            <person name="Lewis S.E."/>
            <person name="Richards S."/>
            <person name="Ashburner M."/>
            <person name="Henderson S.N."/>
            <person name="Sutton G.G."/>
            <person name="Wortman J.R."/>
            <person name="Yandell M.D."/>
            <person name="Zhang Q."/>
            <person name="Chen L.X."/>
            <person name="Brandon R.C."/>
            <person name="Rogers Y.-H.C."/>
            <person name="Blazej R.G."/>
            <person name="Champe M."/>
            <person name="Pfeiffer B.D."/>
            <person name="Wan K.H."/>
            <person name="Doyle C."/>
            <person name="Baxter E.G."/>
            <person name="Helt G."/>
            <person name="Nelson C.R."/>
            <person name="Miklos G.L.G."/>
            <person name="Abril J.F."/>
            <person name="Agbayani A."/>
            <person name="An H.-J."/>
            <person name="Andrews-Pfannkoch C."/>
            <person name="Baldwin D."/>
            <person name="Ballew R.M."/>
            <person name="Basu A."/>
            <person name="Baxendale J."/>
            <person name="Bayraktaroglu L."/>
            <person name="Beasley E.M."/>
            <person name="Beeson K.Y."/>
            <person name="Benos P.V."/>
            <person name="Berman B.P."/>
            <person name="Bhandari D."/>
            <person name="Bolshakov S."/>
            <person name="Borkova D."/>
            <person name="Botchan M.R."/>
            <person name="Bouck J."/>
            <person name="Brokstein P."/>
            <person name="Brottier P."/>
            <person name="Burtis K.C."/>
            <person name="Busam D.A."/>
            <person name="Butler H."/>
            <person name="Cadieu E."/>
            <person name="Center A."/>
            <person name="Chandra I."/>
            <person name="Cherry J.M."/>
            <person name="Cawley S."/>
            <person name="Dahlke C."/>
            <person name="Davenport L.B."/>
            <person name="Davies P."/>
            <person name="de Pablos B."/>
            <person name="Delcher A."/>
            <person name="Deng Z."/>
            <person name="Mays A.D."/>
            <person name="Dew I."/>
            <person name="Dietz S.M."/>
            <person name="Dodson K."/>
            <person name="Doup L.E."/>
            <person name="Downes M."/>
            <person name="Dugan-Rocha S."/>
            <person name="Dunkov B.C."/>
            <person name="Dunn P."/>
            <person name="Durbin K.J."/>
            <person name="Evangelista C.C."/>
            <person name="Ferraz C."/>
            <person name="Ferriera S."/>
            <person name="Fleischmann W."/>
            <person name="Fosler C."/>
            <person name="Gabrielian A.E."/>
            <person name="Garg N.S."/>
            <person name="Gelbart W.M."/>
            <person name="Glasser K."/>
            <person name="Glodek A."/>
            <person name="Gong F."/>
            <person name="Gorrell J.H."/>
            <person name="Gu Z."/>
            <person name="Guan P."/>
            <person name="Harris M."/>
            <person name="Harris N.L."/>
            <person name="Harvey D.A."/>
            <person name="Heiman T.J."/>
            <person name="Hernandez J.R."/>
            <person name="Houck J."/>
            <person name="Hostin D."/>
            <person name="Houston K.A."/>
            <person name="Howland T.J."/>
            <person name="Wei M.-H."/>
            <person name="Ibegwam C."/>
            <person name="Jalali M."/>
            <person name="Kalush F."/>
            <person name="Karpen G.H."/>
            <person name="Ke Z."/>
            <person name="Kennison J.A."/>
            <person name="Ketchum K.A."/>
            <person name="Kimmel B.E."/>
            <person name="Kodira C.D."/>
            <person name="Kraft C.L."/>
            <person name="Kravitz S."/>
            <person name="Kulp D."/>
            <person name="Lai Z."/>
            <person name="Lasko P."/>
            <person name="Lei Y."/>
            <person name="Levitsky A.A."/>
            <person name="Li J.H."/>
            <person name="Li Z."/>
            <person name="Liang Y."/>
            <person name="Lin X."/>
            <person name="Liu X."/>
            <person name="Mattei B."/>
            <person name="McIntosh T.C."/>
            <person name="McLeod M.P."/>
            <person name="McPherson D."/>
            <person name="Merkulov G."/>
            <person name="Milshina N.V."/>
            <person name="Mobarry C."/>
            <person name="Morris J."/>
            <person name="Moshrefi A."/>
            <person name="Mount S.M."/>
            <person name="Moy M."/>
            <person name="Murphy B."/>
            <person name="Murphy L."/>
            <person name="Muzny D.M."/>
            <person name="Nelson D.L."/>
            <person name="Nelson D.R."/>
            <person name="Nelson K.A."/>
            <person name="Nixon K."/>
            <person name="Nusskern D.R."/>
            <person name="Pacleb J.M."/>
            <person name="Palazzolo M."/>
            <person name="Pittman G.S."/>
            <person name="Pan S."/>
            <person name="Pollard J."/>
            <person name="Puri V."/>
            <person name="Reese M.G."/>
            <person name="Reinert K."/>
            <person name="Remington K."/>
            <person name="Saunders R.D.C."/>
            <person name="Scheeler F."/>
            <person name="Shen H."/>
            <person name="Shue B.C."/>
            <person name="Siden-Kiamos I."/>
            <person name="Simpson M."/>
            <person name="Skupski M.P."/>
            <person name="Smith T.J."/>
            <person name="Spier E."/>
            <person name="Spradling A.C."/>
            <person name="Stapleton M."/>
            <person name="Strong R."/>
            <person name="Sun E."/>
            <person name="Svirskas R."/>
            <person name="Tector C."/>
            <person name="Turner R."/>
            <person name="Venter E."/>
            <person name="Wang A.H."/>
            <person name="Wang X."/>
            <person name="Wang Z.-Y."/>
            <person name="Wassarman D.A."/>
            <person name="Weinstock G.M."/>
            <person name="Weissenbach J."/>
            <person name="Williams S.M."/>
            <person name="Woodage T."/>
            <person name="Worley K.C."/>
            <person name="Wu D."/>
            <person name="Yang S."/>
            <person name="Yao Q.A."/>
            <person name="Ye J."/>
            <person name="Yeh R.-F."/>
            <person name="Zaveri J.S."/>
            <person name="Zhan M."/>
            <person name="Zhang G."/>
            <person name="Zhao Q."/>
            <person name="Zheng L."/>
            <person name="Zheng X.H."/>
            <person name="Zhong F.N."/>
            <person name="Zhong W."/>
            <person name="Zhou X."/>
            <person name="Zhu S.C."/>
            <person name="Zhu X."/>
            <person name="Smith H.O."/>
            <person name="Gibbs R.A."/>
            <person name="Myers E.W."/>
            <person name="Rubin G.M."/>
            <person name="Venter J.C."/>
        </authorList>
    </citation>
    <scope>NUCLEOTIDE SEQUENCE [LARGE SCALE GENOMIC DNA]</scope>
    <source>
        <strain>Berkeley</strain>
    </source>
</reference>
<reference key="3">
    <citation type="journal article" date="2002" name="Genome Biol.">
        <title>Annotation of the Drosophila melanogaster euchromatic genome: a systematic review.</title>
        <authorList>
            <person name="Misra S."/>
            <person name="Crosby M.A."/>
            <person name="Mungall C.J."/>
            <person name="Matthews B.B."/>
            <person name="Campbell K.S."/>
            <person name="Hradecky P."/>
            <person name="Huang Y."/>
            <person name="Kaminker J.S."/>
            <person name="Millburn G.H."/>
            <person name="Prochnik S.E."/>
            <person name="Smith C.D."/>
            <person name="Tupy J.L."/>
            <person name="Whitfield E.J."/>
            <person name="Bayraktaroglu L."/>
            <person name="Berman B.P."/>
            <person name="Bettencourt B.R."/>
            <person name="Celniker S.E."/>
            <person name="de Grey A.D.N.J."/>
            <person name="Drysdale R.A."/>
            <person name="Harris N.L."/>
            <person name="Richter J."/>
            <person name="Russo S."/>
            <person name="Schroeder A.J."/>
            <person name="Shu S.Q."/>
            <person name="Stapleton M."/>
            <person name="Yamada C."/>
            <person name="Ashburner M."/>
            <person name="Gelbart W.M."/>
            <person name="Rubin G.M."/>
            <person name="Lewis S.E."/>
        </authorList>
    </citation>
    <scope>GENOME REANNOTATION</scope>
    <source>
        <strain>Berkeley</strain>
    </source>
</reference>
<reference key="4">
    <citation type="journal article" date="2002" name="Genome Biol.">
        <title>A Drosophila full-length cDNA resource.</title>
        <authorList>
            <person name="Stapleton M."/>
            <person name="Carlson J.W."/>
            <person name="Brokstein P."/>
            <person name="Yu C."/>
            <person name="Champe M."/>
            <person name="George R.A."/>
            <person name="Guarin H."/>
            <person name="Kronmiller B."/>
            <person name="Pacleb J.M."/>
            <person name="Park S."/>
            <person name="Wan K.H."/>
            <person name="Rubin G.M."/>
            <person name="Celniker S.E."/>
        </authorList>
    </citation>
    <scope>NUCLEOTIDE SEQUENCE [LARGE SCALE MRNA]</scope>
    <source>
        <strain>Berkeley</strain>
        <tissue>Embryo</tissue>
    </source>
</reference>
<reference key="5">
    <citation type="journal article" date="2005" name="Exp. Cell Res.">
        <title>Using Drosophila eye as a model system to characterize the function of mars gene in cell-cycle regulation.</title>
        <authorList>
            <person name="Yang C.-P."/>
            <person name="Chen M.-S."/>
            <person name="Liaw G.-J."/>
            <person name="Chen S.-F."/>
            <person name="Chou G."/>
            <person name="Fan S.-S."/>
        </authorList>
    </citation>
    <scope>FUNCTION</scope>
    <scope>DEVELOPMENTAL STAGE</scope>
    <scope>SUBCELLULAR LOCATION</scope>
</reference>
<reference key="6">
    <citation type="journal article" date="2007" name="Mol. Biosyst.">
        <title>An integrated chemical, mass spectrometric and computational strategy for (quantitative) phosphoproteomics: application to Drosophila melanogaster Kc167 cells.</title>
        <authorList>
            <person name="Bodenmiller B."/>
            <person name="Mueller L.N."/>
            <person name="Pedrioli P.G.A."/>
            <person name="Pflieger D."/>
            <person name="Juenger M.A."/>
            <person name="Eng J.K."/>
            <person name="Aebersold R."/>
            <person name="Tao W.A."/>
        </authorList>
    </citation>
    <scope>PHOSPHORYLATION [LARGE SCALE ANALYSIS] AT SER-76 AND SER-554</scope>
    <scope>IDENTIFICATION BY MASS SPECTROMETRY</scope>
</reference>
<reference key="7">
    <citation type="journal article" date="2008" name="J. Proteome Res.">
        <title>Phosphoproteome analysis of Drosophila melanogaster embryos.</title>
        <authorList>
            <person name="Zhai B."/>
            <person name="Villen J."/>
            <person name="Beausoleil S.A."/>
            <person name="Mintseris J."/>
            <person name="Gygi S.P."/>
        </authorList>
    </citation>
    <scope>PHOSPHORYLATION [LARGE SCALE ANALYSIS] AT SER-49; THR-51; SER-170; TYR-172; SER-444; THR-519; SER-554; SER-785; SER-792 AND THR-826</scope>
    <scope>IDENTIFICATION BY MASS SPECTROMETRY</scope>
    <source>
        <tissue>Embryo</tissue>
    </source>
</reference>
<organism>
    <name type="scientific">Drosophila melanogaster</name>
    <name type="common">Fruit fly</name>
    <dbReference type="NCBI Taxonomy" id="7227"/>
    <lineage>
        <taxon>Eukaryota</taxon>
        <taxon>Metazoa</taxon>
        <taxon>Ecdysozoa</taxon>
        <taxon>Arthropoda</taxon>
        <taxon>Hexapoda</taxon>
        <taxon>Insecta</taxon>
        <taxon>Pterygota</taxon>
        <taxon>Neoptera</taxon>
        <taxon>Endopterygota</taxon>
        <taxon>Diptera</taxon>
        <taxon>Brachycera</taxon>
        <taxon>Muscomorpha</taxon>
        <taxon>Ephydroidea</taxon>
        <taxon>Drosophilidae</taxon>
        <taxon>Drosophila</taxon>
        <taxon>Sophophora</taxon>
    </lineage>
</organism>
<keyword id="KW-0131">Cell cycle</keyword>
<keyword id="KW-1003">Cell membrane</keyword>
<keyword id="KW-0963">Cytoplasm</keyword>
<keyword id="KW-0206">Cytoskeleton</keyword>
<keyword id="KW-0472">Membrane</keyword>
<keyword id="KW-0539">Nucleus</keyword>
<keyword id="KW-0597">Phosphoprotein</keyword>
<keyword id="KW-1185">Reference proteome</keyword>
<proteinExistence type="evidence at protein level"/>
<evidence type="ECO:0000256" key="1">
    <source>
        <dbReference type="SAM" id="MobiDB-lite"/>
    </source>
</evidence>
<evidence type="ECO:0000269" key="2">
    <source>
    </source>
</evidence>
<evidence type="ECO:0000269" key="3">
    <source>
    </source>
</evidence>
<evidence type="ECO:0000269" key="4">
    <source>
    </source>
</evidence>
<evidence type="ECO:0000305" key="5"/>
<name>MARS_DROME</name>
<sequence length="921" mass="101946">MQRHKELYKEQSLVLSPRNHCQENRDRLQAARAKKREDCFYQNRIISVSPTPVKIKQLAAAQAALTQENVAPKLESPERLDTKPAELLKESNPKVSRQKLYLQRYMEWKIAKTKEHKQQDQKRRGAAINVPTVKQSKALPKSQTFRVPDNLASAKQKEAAPMFQPPKRCSLYMIANPTGKGKAAEPIKPSIPKPTSAAAPPSSNTVAASSALARHKSAASATKIVPAIRQNNNPVALARQKAAARPIPNTTKQTTSVRQPGIEAKKITTTIPRPTPATVTKAKTPGIRQQPPVVSTKPRLPEPPAPRTARLPNVLSKPFEKPLGNKAPVTRRANVVKPQPIRGGGGAAAKFKDTAGATSKAASHSIRMKATKIKSQYTRLQDNVRKLPQLKAELLHAATLDIPPLTPLDDIHNPFIDQATSTQCKSNNSSGHLLEAFGDTILLSPVAPVKAEGESSVKRQLLPEGKKEASGPVAKKKFDFTRYSVANSPAEDSLILDPQQTTVKEDTGDSTLVPEGTKTPPRRESNGMPNYLSPFVSVSRGKVNSRCEKEKRNSFYLSNEESPLEVRRAIESVLYFRLQLENEITRLQALCAEWEAYSKENEARLQETGGIDMINVTIGQTRLLTTKKMMQFSGLIDRCEAGATGKNSQPNDGSEDSKPVQAEDLEGWWDMLRLQSENVDKRFDNLKRWKANDWLDPDAVAEEPKQPKPKPKISRNMKIKSKAKPSSNLQQFLRKAHANMKKTKVEEPTLEDGLPATSSRHSSPRVIVVRNRRSFSPARTVLRMSTGEGRQSIAPNALLKSAILAAAEQNAAKTPPPKPRTSILKTPGTTKRQNRGVLFSAKKSVRRFQFTYEEGNISNDETVGADKLEDCEEDMSLEASTESGSLEQNPGRDSNQENEATPRTYTLRNRRVNLRPSSEFM</sequence>
<dbReference type="EMBL" id="AJ565928">
    <property type="protein sequence ID" value="CAD92805.1"/>
    <property type="molecule type" value="mRNA"/>
</dbReference>
<dbReference type="EMBL" id="AE013599">
    <property type="protein sequence ID" value="AAF58367.1"/>
    <property type="molecule type" value="Genomic_DNA"/>
</dbReference>
<dbReference type="EMBL" id="AY058511">
    <property type="protein sequence ID" value="AAL13740.1"/>
    <property type="molecule type" value="mRNA"/>
</dbReference>
<dbReference type="RefSeq" id="NP_001163142.1">
    <property type="nucleotide sequence ID" value="NM_001169671.2"/>
</dbReference>
<dbReference type="RefSeq" id="NP_001286387.1">
    <property type="nucleotide sequence ID" value="NM_001299458.1"/>
</dbReference>
<dbReference type="RefSeq" id="NP_001286388.1">
    <property type="nucleotide sequence ID" value="NM_001299459.1"/>
</dbReference>
<dbReference type="RefSeq" id="NP_610878.1">
    <property type="nucleotide sequence ID" value="NM_137034.4"/>
</dbReference>
<dbReference type="SMR" id="Q7K3L1"/>
<dbReference type="BioGRID" id="62257">
    <property type="interactions" value="19"/>
</dbReference>
<dbReference type="FunCoup" id="Q7K3L1">
    <property type="interactions" value="137"/>
</dbReference>
<dbReference type="IntAct" id="Q7K3L1">
    <property type="interactions" value="22"/>
</dbReference>
<dbReference type="STRING" id="7227.FBpp0311207"/>
<dbReference type="GlyGen" id="Q7K3L1">
    <property type="glycosylation" value="2 sites"/>
</dbReference>
<dbReference type="iPTMnet" id="Q7K3L1"/>
<dbReference type="PaxDb" id="7227-FBpp0290601"/>
<dbReference type="DNASU" id="36498"/>
<dbReference type="EnsemblMetazoa" id="FBtr0087668">
    <property type="protein sequence ID" value="FBpp0086788"/>
    <property type="gene ID" value="FBgn0033845"/>
</dbReference>
<dbReference type="EnsemblMetazoa" id="FBtr0301387">
    <property type="protein sequence ID" value="FBpp0290601"/>
    <property type="gene ID" value="FBgn0033845"/>
</dbReference>
<dbReference type="EnsemblMetazoa" id="FBtr0344895">
    <property type="protein sequence ID" value="FBpp0311206"/>
    <property type="gene ID" value="FBgn0033845"/>
</dbReference>
<dbReference type="EnsemblMetazoa" id="FBtr0344896">
    <property type="protein sequence ID" value="FBpp0311207"/>
    <property type="gene ID" value="FBgn0033845"/>
</dbReference>
<dbReference type="GeneID" id="36498"/>
<dbReference type="KEGG" id="dme:Dmel_CG17064"/>
<dbReference type="UCSC" id="CG17064-RA">
    <property type="organism name" value="d. melanogaster"/>
</dbReference>
<dbReference type="AGR" id="FB:FBgn0033845"/>
<dbReference type="CTD" id="36498"/>
<dbReference type="FlyBase" id="FBgn0033845">
    <property type="gene designation" value="mars"/>
</dbReference>
<dbReference type="VEuPathDB" id="VectorBase:FBgn0033845"/>
<dbReference type="eggNOG" id="KOG3971">
    <property type="taxonomic scope" value="Eukaryota"/>
</dbReference>
<dbReference type="GeneTree" id="ENSGT00940000158652"/>
<dbReference type="HOGENOM" id="CLU_308428_0_0_1"/>
<dbReference type="InParanoid" id="Q7K3L1"/>
<dbReference type="OMA" id="ATGKNRQ"/>
<dbReference type="OrthoDB" id="10023951at2759"/>
<dbReference type="PhylomeDB" id="Q7K3L1"/>
<dbReference type="Reactome" id="R-DME-6794361">
    <property type="pathway name" value="Neurexins and neuroligins"/>
</dbReference>
<dbReference type="SignaLink" id="Q7K3L1"/>
<dbReference type="BioGRID-ORCS" id="36498">
    <property type="hits" value="1 hit in 1 CRISPR screen"/>
</dbReference>
<dbReference type="CD-CODE" id="2838EF58">
    <property type="entry name" value="Centrosome"/>
</dbReference>
<dbReference type="GenomeRNAi" id="36498"/>
<dbReference type="PRO" id="PR:Q7K3L1"/>
<dbReference type="Proteomes" id="UP000000803">
    <property type="component" value="Chromosome 2R"/>
</dbReference>
<dbReference type="Bgee" id="FBgn0033845">
    <property type="expression patterns" value="Expressed in dorsal appendage forming follicle cell in ovary and 105 other cell types or tissues"/>
</dbReference>
<dbReference type="ExpressionAtlas" id="Q7K3L1">
    <property type="expression patterns" value="baseline and differential"/>
</dbReference>
<dbReference type="GO" id="GO:0005737">
    <property type="term" value="C:cytoplasm"/>
    <property type="evidence" value="ECO:0000314"/>
    <property type="project" value="UniProtKB"/>
</dbReference>
<dbReference type="GO" id="GO:0072686">
    <property type="term" value="C:mitotic spindle"/>
    <property type="evidence" value="ECO:0000314"/>
    <property type="project" value="FlyBase"/>
</dbReference>
<dbReference type="GO" id="GO:0005654">
    <property type="term" value="C:nucleoplasm"/>
    <property type="evidence" value="ECO:0000314"/>
    <property type="project" value="UniProtKB"/>
</dbReference>
<dbReference type="GO" id="GO:0005634">
    <property type="term" value="C:nucleus"/>
    <property type="evidence" value="ECO:0000314"/>
    <property type="project" value="FlyBase"/>
</dbReference>
<dbReference type="GO" id="GO:0005886">
    <property type="term" value="C:plasma membrane"/>
    <property type="evidence" value="ECO:0007669"/>
    <property type="project" value="UniProtKB-SubCell"/>
</dbReference>
<dbReference type="GO" id="GO:0005819">
    <property type="term" value="C:spindle"/>
    <property type="evidence" value="ECO:0000314"/>
    <property type="project" value="UniProtKB"/>
</dbReference>
<dbReference type="GO" id="GO:0005876">
    <property type="term" value="C:spindle microtubule"/>
    <property type="evidence" value="ECO:0000314"/>
    <property type="project" value="FlyBase"/>
</dbReference>
<dbReference type="GO" id="GO:0000922">
    <property type="term" value="C:spindle pole"/>
    <property type="evidence" value="ECO:0000314"/>
    <property type="project" value="FlyBase"/>
</dbReference>
<dbReference type="GO" id="GO:0031616">
    <property type="term" value="C:spindle pole centrosome"/>
    <property type="evidence" value="ECO:0000318"/>
    <property type="project" value="GO_Central"/>
</dbReference>
<dbReference type="GO" id="GO:0008017">
    <property type="term" value="F:microtubule binding"/>
    <property type="evidence" value="ECO:0000314"/>
    <property type="project" value="FlyBase"/>
</dbReference>
<dbReference type="GO" id="GO:0008157">
    <property type="term" value="F:protein phosphatase 1 binding"/>
    <property type="evidence" value="ECO:0000353"/>
    <property type="project" value="FlyBase"/>
</dbReference>
<dbReference type="GO" id="GO:0051642">
    <property type="term" value="P:centrosome localization"/>
    <property type="evidence" value="ECO:0000315"/>
    <property type="project" value="FlyBase"/>
</dbReference>
<dbReference type="GO" id="GO:0007059">
    <property type="term" value="P:chromosome segregation"/>
    <property type="evidence" value="ECO:0000316"/>
    <property type="project" value="FlyBase"/>
</dbReference>
<dbReference type="GO" id="GO:0051382">
    <property type="term" value="P:kinetochore assembly"/>
    <property type="evidence" value="ECO:0000315"/>
    <property type="project" value="FlyBase"/>
</dbReference>
<dbReference type="GO" id="GO:0007052">
    <property type="term" value="P:mitotic spindle organization"/>
    <property type="evidence" value="ECO:0000315"/>
    <property type="project" value="FlyBase"/>
</dbReference>
<dbReference type="GO" id="GO:0051726">
    <property type="term" value="P:regulation of cell cycle"/>
    <property type="evidence" value="ECO:0000315"/>
    <property type="project" value="UniProtKB"/>
</dbReference>
<dbReference type="GO" id="GO:0007346">
    <property type="term" value="P:regulation of mitotic cell cycle"/>
    <property type="evidence" value="ECO:0000315"/>
    <property type="project" value="FlyBase"/>
</dbReference>
<dbReference type="GO" id="GO:0023052">
    <property type="term" value="P:signaling"/>
    <property type="evidence" value="ECO:0007669"/>
    <property type="project" value="InterPro"/>
</dbReference>
<dbReference type="GO" id="GO:0007051">
    <property type="term" value="P:spindle organization"/>
    <property type="evidence" value="ECO:0000314"/>
    <property type="project" value="FlyBase"/>
</dbReference>
<dbReference type="InterPro" id="IPR005026">
    <property type="entry name" value="SAPAP"/>
</dbReference>
<dbReference type="PANTHER" id="PTHR12353:SF1">
    <property type="entry name" value="DISKS LARGE-ASSOCIATED PROTEIN 5"/>
    <property type="match status" value="1"/>
</dbReference>
<dbReference type="PANTHER" id="PTHR12353">
    <property type="entry name" value="DISKS LARGE-ASSOCIATED PROTEIN DAP SAP90/PSD-95-ASSOCIATED PROTEIN"/>
    <property type="match status" value="1"/>
</dbReference>
<dbReference type="Pfam" id="PF03359">
    <property type="entry name" value="GKAP"/>
    <property type="match status" value="1"/>
</dbReference>